<name>BIOB_DECAR</name>
<dbReference type="EC" id="2.8.1.6" evidence="1"/>
<dbReference type="EMBL" id="CP000089">
    <property type="protein sequence ID" value="AAZ45375.1"/>
    <property type="molecule type" value="Genomic_DNA"/>
</dbReference>
<dbReference type="SMR" id="Q47IF6"/>
<dbReference type="STRING" id="159087.Daro_0618"/>
<dbReference type="KEGG" id="dar:Daro_0618"/>
<dbReference type="eggNOG" id="COG0502">
    <property type="taxonomic scope" value="Bacteria"/>
</dbReference>
<dbReference type="HOGENOM" id="CLU_033172_1_2_4"/>
<dbReference type="OrthoDB" id="9786826at2"/>
<dbReference type="UniPathway" id="UPA00078">
    <property type="reaction ID" value="UER00162"/>
</dbReference>
<dbReference type="GO" id="GO:0051537">
    <property type="term" value="F:2 iron, 2 sulfur cluster binding"/>
    <property type="evidence" value="ECO:0007669"/>
    <property type="project" value="UniProtKB-KW"/>
</dbReference>
<dbReference type="GO" id="GO:0051539">
    <property type="term" value="F:4 iron, 4 sulfur cluster binding"/>
    <property type="evidence" value="ECO:0007669"/>
    <property type="project" value="UniProtKB-KW"/>
</dbReference>
<dbReference type="GO" id="GO:0004076">
    <property type="term" value="F:biotin synthase activity"/>
    <property type="evidence" value="ECO:0007669"/>
    <property type="project" value="UniProtKB-UniRule"/>
</dbReference>
<dbReference type="GO" id="GO:0005506">
    <property type="term" value="F:iron ion binding"/>
    <property type="evidence" value="ECO:0007669"/>
    <property type="project" value="UniProtKB-UniRule"/>
</dbReference>
<dbReference type="GO" id="GO:0009102">
    <property type="term" value="P:biotin biosynthetic process"/>
    <property type="evidence" value="ECO:0007669"/>
    <property type="project" value="UniProtKB-UniRule"/>
</dbReference>
<dbReference type="CDD" id="cd01335">
    <property type="entry name" value="Radical_SAM"/>
    <property type="match status" value="1"/>
</dbReference>
<dbReference type="FunFam" id="3.20.20.70:FF:000011">
    <property type="entry name" value="Biotin synthase"/>
    <property type="match status" value="1"/>
</dbReference>
<dbReference type="Gene3D" id="3.20.20.70">
    <property type="entry name" value="Aldolase class I"/>
    <property type="match status" value="1"/>
</dbReference>
<dbReference type="HAMAP" id="MF_01694">
    <property type="entry name" value="BioB"/>
    <property type="match status" value="1"/>
</dbReference>
<dbReference type="InterPro" id="IPR013785">
    <property type="entry name" value="Aldolase_TIM"/>
</dbReference>
<dbReference type="InterPro" id="IPR010722">
    <property type="entry name" value="BATS_dom"/>
</dbReference>
<dbReference type="InterPro" id="IPR002684">
    <property type="entry name" value="Biotin_synth/BioAB"/>
</dbReference>
<dbReference type="InterPro" id="IPR024177">
    <property type="entry name" value="Biotin_synthase"/>
</dbReference>
<dbReference type="InterPro" id="IPR006638">
    <property type="entry name" value="Elp3/MiaA/NifB-like_rSAM"/>
</dbReference>
<dbReference type="InterPro" id="IPR007197">
    <property type="entry name" value="rSAM"/>
</dbReference>
<dbReference type="NCBIfam" id="TIGR00433">
    <property type="entry name" value="bioB"/>
    <property type="match status" value="1"/>
</dbReference>
<dbReference type="PANTHER" id="PTHR22976">
    <property type="entry name" value="BIOTIN SYNTHASE"/>
    <property type="match status" value="1"/>
</dbReference>
<dbReference type="PANTHER" id="PTHR22976:SF2">
    <property type="entry name" value="BIOTIN SYNTHASE, MITOCHONDRIAL"/>
    <property type="match status" value="1"/>
</dbReference>
<dbReference type="Pfam" id="PF06968">
    <property type="entry name" value="BATS"/>
    <property type="match status" value="1"/>
</dbReference>
<dbReference type="Pfam" id="PF04055">
    <property type="entry name" value="Radical_SAM"/>
    <property type="match status" value="1"/>
</dbReference>
<dbReference type="PIRSF" id="PIRSF001619">
    <property type="entry name" value="Biotin_synth"/>
    <property type="match status" value="1"/>
</dbReference>
<dbReference type="SFLD" id="SFLDF00272">
    <property type="entry name" value="biotin_synthase"/>
    <property type="match status" value="1"/>
</dbReference>
<dbReference type="SFLD" id="SFLDG01278">
    <property type="entry name" value="biotin_synthase_like"/>
    <property type="match status" value="1"/>
</dbReference>
<dbReference type="SMART" id="SM00876">
    <property type="entry name" value="BATS"/>
    <property type="match status" value="1"/>
</dbReference>
<dbReference type="SMART" id="SM00729">
    <property type="entry name" value="Elp3"/>
    <property type="match status" value="1"/>
</dbReference>
<dbReference type="SUPFAM" id="SSF102114">
    <property type="entry name" value="Radical SAM enzymes"/>
    <property type="match status" value="1"/>
</dbReference>
<dbReference type="PROSITE" id="PS51918">
    <property type="entry name" value="RADICAL_SAM"/>
    <property type="match status" value="1"/>
</dbReference>
<gene>
    <name evidence="1" type="primary">bioB</name>
    <name type="ordered locus">Daro_0618</name>
</gene>
<comment type="function">
    <text evidence="1">Catalyzes the conversion of dethiobiotin (DTB) to biotin by the insertion of a sulfur atom into dethiobiotin via a radical-based mechanism.</text>
</comment>
<comment type="catalytic activity">
    <reaction evidence="1">
        <text>(4R,5S)-dethiobiotin + (sulfur carrier)-SH + 2 reduced [2Fe-2S]-[ferredoxin] + 2 S-adenosyl-L-methionine = (sulfur carrier)-H + biotin + 2 5'-deoxyadenosine + 2 L-methionine + 2 oxidized [2Fe-2S]-[ferredoxin]</text>
        <dbReference type="Rhea" id="RHEA:22060"/>
        <dbReference type="Rhea" id="RHEA-COMP:10000"/>
        <dbReference type="Rhea" id="RHEA-COMP:10001"/>
        <dbReference type="Rhea" id="RHEA-COMP:14737"/>
        <dbReference type="Rhea" id="RHEA-COMP:14739"/>
        <dbReference type="ChEBI" id="CHEBI:17319"/>
        <dbReference type="ChEBI" id="CHEBI:29917"/>
        <dbReference type="ChEBI" id="CHEBI:33737"/>
        <dbReference type="ChEBI" id="CHEBI:33738"/>
        <dbReference type="ChEBI" id="CHEBI:57586"/>
        <dbReference type="ChEBI" id="CHEBI:57844"/>
        <dbReference type="ChEBI" id="CHEBI:59789"/>
        <dbReference type="ChEBI" id="CHEBI:64428"/>
        <dbReference type="ChEBI" id="CHEBI:149473"/>
        <dbReference type="EC" id="2.8.1.6"/>
    </reaction>
</comment>
<comment type="cofactor">
    <cofactor evidence="1">
        <name>[4Fe-4S] cluster</name>
        <dbReference type="ChEBI" id="CHEBI:49883"/>
    </cofactor>
    <text evidence="1">Binds 1 [4Fe-4S] cluster. The cluster is coordinated with 3 cysteines and an exchangeable S-adenosyl-L-methionine.</text>
</comment>
<comment type="cofactor">
    <cofactor evidence="1">
        <name>[2Fe-2S] cluster</name>
        <dbReference type="ChEBI" id="CHEBI:190135"/>
    </cofactor>
    <text evidence="1">Binds 1 [2Fe-2S] cluster. The cluster is coordinated with 3 cysteines and 1 arginine.</text>
</comment>
<comment type="pathway">
    <text evidence="1">Cofactor biosynthesis; biotin biosynthesis; biotin from 7,8-diaminononanoate: step 2/2.</text>
</comment>
<comment type="subunit">
    <text evidence="1">Homodimer.</text>
</comment>
<comment type="similarity">
    <text evidence="1">Belongs to the radical SAM superfamily. Biotin synthase family.</text>
</comment>
<sequence length="327" mass="35802">MQASSLAAVSSASPSAPARRWTVEEVLGLYDMPLMDLIWRAQGVHRENFDPNAIQRSTLLSVKTGGCSEDCSYCSQSARYDTDTERERLMPLDQVVAAAKAAKDKGASRFCMGAAWKGPKDNDLDRVLDMVREVKALGMQTCVTLGMLKDGQAEKLKDAGLDYYNHNLDTDKEFYGQVIKSHTHDDRLDTLDQVRDAGINVCSGGIIGMGESRKNRAALIVQLANLPKPPESVPINNLVPIPGTPLADNPRLDPFEFVRTIAAARIAMPTSWVRLSAGRQEMSDELQAMCFLAGANSMFYGDFLLTTGNPDIERDDALFARLGVKAI</sequence>
<keyword id="KW-0001">2Fe-2S</keyword>
<keyword id="KW-0004">4Fe-4S</keyword>
<keyword id="KW-0093">Biotin biosynthesis</keyword>
<keyword id="KW-0408">Iron</keyword>
<keyword id="KW-0411">Iron-sulfur</keyword>
<keyword id="KW-0479">Metal-binding</keyword>
<keyword id="KW-0949">S-adenosyl-L-methionine</keyword>
<keyword id="KW-0808">Transferase</keyword>
<feature type="chain" id="PRO_0000381342" description="Biotin synthase">
    <location>
        <begin position="1"/>
        <end position="327"/>
    </location>
</feature>
<feature type="domain" description="Radical SAM core" evidence="2">
    <location>
        <begin position="52"/>
        <end position="279"/>
    </location>
</feature>
<feature type="binding site" evidence="1">
    <location>
        <position position="67"/>
    </location>
    <ligand>
        <name>[4Fe-4S] cluster</name>
        <dbReference type="ChEBI" id="CHEBI:49883"/>
        <note>4Fe-4S-S-AdoMet</note>
    </ligand>
</feature>
<feature type="binding site" evidence="1">
    <location>
        <position position="71"/>
    </location>
    <ligand>
        <name>[4Fe-4S] cluster</name>
        <dbReference type="ChEBI" id="CHEBI:49883"/>
        <note>4Fe-4S-S-AdoMet</note>
    </ligand>
</feature>
<feature type="binding site" evidence="1">
    <location>
        <position position="74"/>
    </location>
    <ligand>
        <name>[4Fe-4S] cluster</name>
        <dbReference type="ChEBI" id="CHEBI:49883"/>
        <note>4Fe-4S-S-AdoMet</note>
    </ligand>
</feature>
<feature type="binding site" evidence="1">
    <location>
        <position position="111"/>
    </location>
    <ligand>
        <name>[2Fe-2S] cluster</name>
        <dbReference type="ChEBI" id="CHEBI:190135"/>
    </ligand>
</feature>
<feature type="binding site" evidence="1">
    <location>
        <position position="142"/>
    </location>
    <ligand>
        <name>[2Fe-2S] cluster</name>
        <dbReference type="ChEBI" id="CHEBI:190135"/>
    </ligand>
</feature>
<feature type="binding site" evidence="1">
    <location>
        <position position="202"/>
    </location>
    <ligand>
        <name>[2Fe-2S] cluster</name>
        <dbReference type="ChEBI" id="CHEBI:190135"/>
    </ligand>
</feature>
<feature type="binding site" evidence="1">
    <location>
        <position position="274"/>
    </location>
    <ligand>
        <name>[2Fe-2S] cluster</name>
        <dbReference type="ChEBI" id="CHEBI:190135"/>
    </ligand>
</feature>
<protein>
    <recommendedName>
        <fullName evidence="1">Biotin synthase</fullName>
        <ecNumber evidence="1">2.8.1.6</ecNumber>
    </recommendedName>
</protein>
<evidence type="ECO:0000255" key="1">
    <source>
        <dbReference type="HAMAP-Rule" id="MF_01694"/>
    </source>
</evidence>
<evidence type="ECO:0000255" key="2">
    <source>
        <dbReference type="PROSITE-ProRule" id="PRU01266"/>
    </source>
</evidence>
<reference key="1">
    <citation type="journal article" date="2009" name="BMC Genomics">
        <title>Metabolic analysis of the soil microbe Dechloromonas aromatica str. RCB: indications of a surprisingly complex life-style and cryptic anaerobic pathways for aromatic degradation.</title>
        <authorList>
            <person name="Salinero K.K."/>
            <person name="Keller K."/>
            <person name="Feil W.S."/>
            <person name="Feil H."/>
            <person name="Trong S."/>
            <person name="Di Bartolo G."/>
            <person name="Lapidus A."/>
        </authorList>
    </citation>
    <scope>NUCLEOTIDE SEQUENCE [LARGE SCALE GENOMIC DNA]</scope>
    <source>
        <strain>RCB</strain>
    </source>
</reference>
<organism>
    <name type="scientific">Dechloromonas aromatica (strain RCB)</name>
    <dbReference type="NCBI Taxonomy" id="159087"/>
    <lineage>
        <taxon>Bacteria</taxon>
        <taxon>Pseudomonadati</taxon>
        <taxon>Pseudomonadota</taxon>
        <taxon>Betaproteobacteria</taxon>
        <taxon>Rhodocyclales</taxon>
        <taxon>Azonexaceae</taxon>
        <taxon>Dechloromonas</taxon>
    </lineage>
</organism>
<proteinExistence type="inferred from homology"/>
<accession>Q47IF6</accession>